<sequence>MCDDEEEEATPLVCDNGSGLVKAGFAGDDAPRAVFPSIVGRPRHQGVMVGMGQKDAYVGDEAQSKRGILTLKYPVEHGIVTNWDDMEKVWHHTFYNELRIAPEENPCLLTEAPLNPKANREKMTQIMFETFNSPAMYVCIQAVLCLYASGRTTGIVLDSGDGVSHTVPIYEGYAMPHAILRLDLAGRELTNYLMRVMCDRGYAFVTTAEREIVRDIKEKLGYVALDFEQEMLTAATSTSLEKSYELPDGQVITIGNERFRCAEALFQPSFLGMESAGVHETVYNSIMKCDIDVRKDLYANNVLSGGTTMFPGIGDRMQKEMVSLAPSTMKIKIIAPPERKYSCWIGGSILASLSTFAAMWIKKSEYDEAGPAIVHRKCF</sequence>
<reference key="1">
    <citation type="journal article" date="1999" name="Gene">
        <title>Genomic organization and evolution of actin genes in the amphioxus Branchiostoma belcheri and Branchiostoma floridae.</title>
        <authorList>
            <person name="Kusakabe R."/>
            <person name="Satoh N."/>
            <person name="Holland L.Z."/>
            <person name="Kusakabe T."/>
        </authorList>
    </citation>
    <scope>NUCLEOTIDE SEQUENCE [MRNA]</scope>
</reference>
<accession>Q93130</accession>
<protein>
    <recommendedName>
        <fullName>Actin, muscle</fullName>
        <ecNumber evidence="2">3.6.4.-</ecNumber>
    </recommendedName>
    <alternativeName>
        <fullName>BbMA1</fullName>
    </alternativeName>
</protein>
<organism>
    <name type="scientific">Branchiostoma belcheri</name>
    <name type="common">Amphioxus</name>
    <dbReference type="NCBI Taxonomy" id="7741"/>
    <lineage>
        <taxon>Eukaryota</taxon>
        <taxon>Metazoa</taxon>
        <taxon>Chordata</taxon>
        <taxon>Cephalochordata</taxon>
        <taxon>Leptocardii</taxon>
        <taxon>Amphioxiformes</taxon>
        <taxon>Branchiostomatidae</taxon>
        <taxon>Branchiostoma</taxon>
    </lineage>
</organism>
<keyword id="KW-0007">Acetylation</keyword>
<keyword id="KW-0067">ATP-binding</keyword>
<keyword id="KW-0963">Cytoplasm</keyword>
<keyword id="KW-0206">Cytoskeleton</keyword>
<keyword id="KW-0378">Hydrolase</keyword>
<keyword id="KW-0514">Muscle protein</keyword>
<keyword id="KW-0547">Nucleotide-binding</keyword>
<keyword id="KW-1185">Reference proteome</keyword>
<comment type="function">
    <text>Actins are highly conserved proteins that are involved in various types of cell motility and are ubiquitously expressed in all eukaryotic cells.</text>
</comment>
<comment type="catalytic activity">
    <reaction evidence="2">
        <text>ATP + H2O = ADP + phosphate + H(+)</text>
        <dbReference type="Rhea" id="RHEA:13065"/>
        <dbReference type="ChEBI" id="CHEBI:15377"/>
        <dbReference type="ChEBI" id="CHEBI:15378"/>
        <dbReference type="ChEBI" id="CHEBI:30616"/>
        <dbReference type="ChEBI" id="CHEBI:43474"/>
        <dbReference type="ChEBI" id="CHEBI:456216"/>
    </reaction>
</comment>
<comment type="subcellular location">
    <subcellularLocation>
        <location>Cytoplasm</location>
        <location>Cytoskeleton</location>
    </subcellularLocation>
</comment>
<comment type="similarity">
    <text evidence="3">Belongs to the actin family.</text>
</comment>
<proteinExistence type="evidence at transcript level"/>
<evidence type="ECO:0000250" key="1"/>
<evidence type="ECO:0000250" key="2">
    <source>
        <dbReference type="UniProtKB" id="P68137"/>
    </source>
</evidence>
<evidence type="ECO:0000305" key="3"/>
<feature type="propeptide" id="PRO_0000000642" description="Removed in mature form" evidence="1">
    <location>
        <begin position="1"/>
        <end position="2"/>
    </location>
</feature>
<feature type="chain" id="PRO_0000000643" description="Actin, muscle">
    <location>
        <begin position="3"/>
        <end position="379"/>
    </location>
</feature>
<feature type="modified residue" description="N-acetylaspartate" evidence="1">
    <location>
        <position position="3"/>
    </location>
</feature>
<dbReference type="EC" id="3.6.4.-" evidence="2"/>
<dbReference type="EMBL" id="D87739">
    <property type="protein sequence ID" value="BAA13445.1"/>
    <property type="molecule type" value="mRNA"/>
</dbReference>
<dbReference type="SMR" id="Q93130"/>
<dbReference type="Proteomes" id="UP000515135">
    <property type="component" value="Unplaced"/>
</dbReference>
<dbReference type="GO" id="GO:0005737">
    <property type="term" value="C:cytoplasm"/>
    <property type="evidence" value="ECO:0007669"/>
    <property type="project" value="UniProtKB-KW"/>
</dbReference>
<dbReference type="GO" id="GO:0005856">
    <property type="term" value="C:cytoskeleton"/>
    <property type="evidence" value="ECO:0007669"/>
    <property type="project" value="UniProtKB-SubCell"/>
</dbReference>
<dbReference type="GO" id="GO:0005524">
    <property type="term" value="F:ATP binding"/>
    <property type="evidence" value="ECO:0007669"/>
    <property type="project" value="UniProtKB-KW"/>
</dbReference>
<dbReference type="GO" id="GO:0016787">
    <property type="term" value="F:hydrolase activity"/>
    <property type="evidence" value="ECO:0007669"/>
    <property type="project" value="UniProtKB-KW"/>
</dbReference>
<dbReference type="CDD" id="cd10224">
    <property type="entry name" value="ASKHA_NBD_actin"/>
    <property type="match status" value="1"/>
</dbReference>
<dbReference type="FunFam" id="2.30.36.70:FF:000001">
    <property type="entry name" value="Actin, alpha skeletal muscle"/>
    <property type="match status" value="1"/>
</dbReference>
<dbReference type="FunFam" id="3.30.420.40:FF:000131">
    <property type="entry name" value="Actin, alpha skeletal muscle"/>
    <property type="match status" value="1"/>
</dbReference>
<dbReference type="FunFam" id="3.30.420.40:FF:000291">
    <property type="entry name" value="Actin, alpha skeletal muscle"/>
    <property type="match status" value="1"/>
</dbReference>
<dbReference type="FunFam" id="3.90.640.10:FF:000047">
    <property type="entry name" value="Actin, alpha skeletal muscle"/>
    <property type="match status" value="1"/>
</dbReference>
<dbReference type="Gene3D" id="3.30.420.40">
    <property type="match status" value="2"/>
</dbReference>
<dbReference type="Gene3D" id="3.90.640.10">
    <property type="entry name" value="Actin, Chain A, domain 4"/>
    <property type="match status" value="1"/>
</dbReference>
<dbReference type="InterPro" id="IPR004000">
    <property type="entry name" value="Actin"/>
</dbReference>
<dbReference type="InterPro" id="IPR020902">
    <property type="entry name" value="Actin/actin-like_CS"/>
</dbReference>
<dbReference type="InterPro" id="IPR004001">
    <property type="entry name" value="Actin_CS"/>
</dbReference>
<dbReference type="InterPro" id="IPR043129">
    <property type="entry name" value="ATPase_NBD"/>
</dbReference>
<dbReference type="PANTHER" id="PTHR11937">
    <property type="entry name" value="ACTIN"/>
    <property type="match status" value="1"/>
</dbReference>
<dbReference type="Pfam" id="PF00022">
    <property type="entry name" value="Actin"/>
    <property type="match status" value="1"/>
</dbReference>
<dbReference type="PRINTS" id="PR00190">
    <property type="entry name" value="ACTIN"/>
</dbReference>
<dbReference type="SMART" id="SM00268">
    <property type="entry name" value="ACTIN"/>
    <property type="match status" value="1"/>
</dbReference>
<dbReference type="SUPFAM" id="SSF53067">
    <property type="entry name" value="Actin-like ATPase domain"/>
    <property type="match status" value="2"/>
</dbReference>
<dbReference type="PROSITE" id="PS00406">
    <property type="entry name" value="ACTINS_1"/>
    <property type="match status" value="1"/>
</dbReference>
<dbReference type="PROSITE" id="PS00432">
    <property type="entry name" value="ACTINS_2"/>
    <property type="match status" value="1"/>
</dbReference>
<dbReference type="PROSITE" id="PS01132">
    <property type="entry name" value="ACTINS_ACT_LIKE"/>
    <property type="match status" value="1"/>
</dbReference>
<name>ACTM_BRABE</name>